<keyword id="KW-0066">ATP synthesis</keyword>
<keyword id="KW-0997">Cell inner membrane</keyword>
<keyword id="KW-1003">Cell membrane</keyword>
<keyword id="KW-0139">CF(1)</keyword>
<keyword id="KW-0375">Hydrogen ion transport</keyword>
<keyword id="KW-0406">Ion transport</keyword>
<keyword id="KW-0472">Membrane</keyword>
<keyword id="KW-0813">Transport</keyword>
<reference key="1">
    <citation type="journal article" date="2006" name="Nat. Biotechnol.">
        <title>Complete genome sequence of the entomopathogenic and metabolically versatile soil bacterium Pseudomonas entomophila.</title>
        <authorList>
            <person name="Vodovar N."/>
            <person name="Vallenet D."/>
            <person name="Cruveiller S."/>
            <person name="Rouy Z."/>
            <person name="Barbe V."/>
            <person name="Acosta C."/>
            <person name="Cattolico L."/>
            <person name="Jubin C."/>
            <person name="Lajus A."/>
            <person name="Segurens B."/>
            <person name="Vacherie B."/>
            <person name="Wincker P."/>
            <person name="Weissenbach J."/>
            <person name="Lemaitre B."/>
            <person name="Medigue C."/>
            <person name="Boccard F."/>
        </authorList>
    </citation>
    <scope>NUCLEOTIDE SEQUENCE [LARGE SCALE GENOMIC DNA]</scope>
    <source>
        <strain>L48</strain>
    </source>
</reference>
<feature type="chain" id="PRO_1000053292" description="ATP synthase gamma chain">
    <location>
        <begin position="1"/>
        <end position="286"/>
    </location>
</feature>
<protein>
    <recommendedName>
        <fullName evidence="1">ATP synthase gamma chain</fullName>
    </recommendedName>
    <alternativeName>
        <fullName evidence="1">ATP synthase F1 sector gamma subunit</fullName>
    </alternativeName>
    <alternativeName>
        <fullName evidence="1">F-ATPase gamma subunit</fullName>
    </alternativeName>
</protein>
<accession>Q1I2I6</accession>
<dbReference type="EMBL" id="CT573326">
    <property type="protein sequence ID" value="CAK18150.1"/>
    <property type="molecule type" value="Genomic_DNA"/>
</dbReference>
<dbReference type="RefSeq" id="WP_011536502.1">
    <property type="nucleotide sequence ID" value="NC_008027.1"/>
</dbReference>
<dbReference type="SMR" id="Q1I2I6"/>
<dbReference type="STRING" id="384676.PSEEN5543"/>
<dbReference type="GeneID" id="32808442"/>
<dbReference type="KEGG" id="pen:PSEEN5543"/>
<dbReference type="eggNOG" id="COG0224">
    <property type="taxonomic scope" value="Bacteria"/>
</dbReference>
<dbReference type="HOGENOM" id="CLU_050669_0_1_6"/>
<dbReference type="OrthoDB" id="9812769at2"/>
<dbReference type="Proteomes" id="UP000000658">
    <property type="component" value="Chromosome"/>
</dbReference>
<dbReference type="GO" id="GO:0005886">
    <property type="term" value="C:plasma membrane"/>
    <property type="evidence" value="ECO:0007669"/>
    <property type="project" value="UniProtKB-SubCell"/>
</dbReference>
<dbReference type="GO" id="GO:0045259">
    <property type="term" value="C:proton-transporting ATP synthase complex"/>
    <property type="evidence" value="ECO:0007669"/>
    <property type="project" value="UniProtKB-KW"/>
</dbReference>
<dbReference type="GO" id="GO:0005524">
    <property type="term" value="F:ATP binding"/>
    <property type="evidence" value="ECO:0007669"/>
    <property type="project" value="UniProtKB-UniRule"/>
</dbReference>
<dbReference type="GO" id="GO:0046933">
    <property type="term" value="F:proton-transporting ATP synthase activity, rotational mechanism"/>
    <property type="evidence" value="ECO:0007669"/>
    <property type="project" value="UniProtKB-UniRule"/>
</dbReference>
<dbReference type="GO" id="GO:0042777">
    <property type="term" value="P:proton motive force-driven plasma membrane ATP synthesis"/>
    <property type="evidence" value="ECO:0007669"/>
    <property type="project" value="UniProtKB-UniRule"/>
</dbReference>
<dbReference type="CDD" id="cd12151">
    <property type="entry name" value="F1-ATPase_gamma"/>
    <property type="match status" value="1"/>
</dbReference>
<dbReference type="FunFam" id="1.10.287.80:FF:000005">
    <property type="entry name" value="ATP synthase gamma chain"/>
    <property type="match status" value="1"/>
</dbReference>
<dbReference type="FunFam" id="3.40.1380.10:FF:000001">
    <property type="entry name" value="ATP synthase gamma chain"/>
    <property type="match status" value="1"/>
</dbReference>
<dbReference type="Gene3D" id="3.40.1380.10">
    <property type="match status" value="1"/>
</dbReference>
<dbReference type="Gene3D" id="1.10.287.80">
    <property type="entry name" value="ATP synthase, gamma subunit, helix hairpin domain"/>
    <property type="match status" value="1"/>
</dbReference>
<dbReference type="HAMAP" id="MF_00815">
    <property type="entry name" value="ATP_synth_gamma_bact"/>
    <property type="match status" value="1"/>
</dbReference>
<dbReference type="InterPro" id="IPR035968">
    <property type="entry name" value="ATP_synth_F1_ATPase_gsu"/>
</dbReference>
<dbReference type="InterPro" id="IPR000131">
    <property type="entry name" value="ATP_synth_F1_gsu"/>
</dbReference>
<dbReference type="InterPro" id="IPR023632">
    <property type="entry name" value="ATP_synth_F1_gsu_CS"/>
</dbReference>
<dbReference type="NCBIfam" id="TIGR01146">
    <property type="entry name" value="ATPsyn_F1gamma"/>
    <property type="match status" value="1"/>
</dbReference>
<dbReference type="NCBIfam" id="NF004144">
    <property type="entry name" value="PRK05621.1-1"/>
    <property type="match status" value="1"/>
</dbReference>
<dbReference type="PANTHER" id="PTHR11693">
    <property type="entry name" value="ATP SYNTHASE GAMMA CHAIN"/>
    <property type="match status" value="1"/>
</dbReference>
<dbReference type="PANTHER" id="PTHR11693:SF22">
    <property type="entry name" value="ATP SYNTHASE SUBUNIT GAMMA, MITOCHONDRIAL"/>
    <property type="match status" value="1"/>
</dbReference>
<dbReference type="Pfam" id="PF00231">
    <property type="entry name" value="ATP-synt"/>
    <property type="match status" value="1"/>
</dbReference>
<dbReference type="PRINTS" id="PR00126">
    <property type="entry name" value="ATPASEGAMMA"/>
</dbReference>
<dbReference type="SUPFAM" id="SSF52943">
    <property type="entry name" value="ATP synthase (F1-ATPase), gamma subunit"/>
    <property type="match status" value="1"/>
</dbReference>
<dbReference type="PROSITE" id="PS00153">
    <property type="entry name" value="ATPASE_GAMMA"/>
    <property type="match status" value="1"/>
</dbReference>
<organism>
    <name type="scientific">Pseudomonas entomophila (strain L48)</name>
    <dbReference type="NCBI Taxonomy" id="384676"/>
    <lineage>
        <taxon>Bacteria</taxon>
        <taxon>Pseudomonadati</taxon>
        <taxon>Pseudomonadota</taxon>
        <taxon>Gammaproteobacteria</taxon>
        <taxon>Pseudomonadales</taxon>
        <taxon>Pseudomonadaceae</taxon>
        <taxon>Pseudomonas</taxon>
    </lineage>
</organism>
<proteinExistence type="inferred from homology"/>
<evidence type="ECO:0000255" key="1">
    <source>
        <dbReference type="HAMAP-Rule" id="MF_00815"/>
    </source>
</evidence>
<name>ATPG_PSEE4</name>
<comment type="function">
    <text evidence="1">Produces ATP from ADP in the presence of a proton gradient across the membrane. The gamma chain is believed to be important in regulating ATPase activity and the flow of protons through the CF(0) complex.</text>
</comment>
<comment type="subunit">
    <text evidence="1">F-type ATPases have 2 components, CF(1) - the catalytic core - and CF(0) - the membrane proton channel. CF(1) has five subunits: alpha(3), beta(3), gamma(1), delta(1), epsilon(1). CF(0) has three main subunits: a, b and c.</text>
</comment>
<comment type="subcellular location">
    <subcellularLocation>
        <location evidence="1">Cell inner membrane</location>
        <topology evidence="1">Peripheral membrane protein</topology>
    </subcellularLocation>
</comment>
<comment type="similarity">
    <text evidence="1">Belongs to the ATPase gamma chain family.</text>
</comment>
<gene>
    <name evidence="1" type="primary">atpG</name>
    <name type="ordered locus">PSEEN5543</name>
</gene>
<sequence length="286" mass="31508">MAGAKEIRSKIASIKSTQKITSAMEKVAVSKMRKAQMRMAASRPYAERIRQVIGHLANANPEYRHPFMIERPVKRAGYIVVSSDRGLCGGLNTNLFKALVKDMNENREQGVEIDLCVIGSKGATFFRIFGGNVVAAISHLGEEPSINDLIGSVKVMLDAYLDGRIDRLSVVSNKFINTMTQKPTVEQLVPLVATPDQDLKHHWDYLYEPDAKELLDGLMVRYVESQVYQAVVENNAAEQAARMIAMKNATDNAGDLISELQLIYNKARQAAITQEISEIVGGAAAV</sequence>